<dbReference type="EMBL" id="M57434">
    <property type="protein sequence ID" value="AAA62758.1"/>
    <property type="molecule type" value="Genomic_DNA"/>
</dbReference>
<dbReference type="EMBL" id="X59482">
    <property type="protein sequence ID" value="CAA42083.1"/>
    <property type="molecule type" value="Genomic_DNA"/>
</dbReference>
<dbReference type="EMBL" id="BA000016">
    <property type="protein sequence ID" value="BAB81129.1"/>
    <property type="molecule type" value="Genomic_DNA"/>
</dbReference>
<dbReference type="PIR" id="C54537">
    <property type="entry name" value="JN0083"/>
</dbReference>
<dbReference type="RefSeq" id="WP_003454632.1">
    <property type="nucleotide sequence ID" value="NC_003366.1"/>
</dbReference>
<dbReference type="SMR" id="P21887"/>
<dbReference type="STRING" id="195102.gene:10490687"/>
<dbReference type="KEGG" id="cpe:CPE1423"/>
<dbReference type="HOGENOM" id="CLU_169738_2_2_9"/>
<dbReference type="Proteomes" id="UP000000818">
    <property type="component" value="Chromosome"/>
</dbReference>
<dbReference type="GO" id="GO:0003690">
    <property type="term" value="F:double-stranded DNA binding"/>
    <property type="evidence" value="ECO:0007669"/>
    <property type="project" value="InterPro"/>
</dbReference>
<dbReference type="GO" id="GO:0006265">
    <property type="term" value="P:DNA topological change"/>
    <property type="evidence" value="ECO:0007669"/>
    <property type="project" value="InterPro"/>
</dbReference>
<dbReference type="GO" id="GO:0030435">
    <property type="term" value="P:sporulation resulting in formation of a cellular spore"/>
    <property type="evidence" value="ECO:0007669"/>
    <property type="project" value="UniProtKB-KW"/>
</dbReference>
<dbReference type="Gene3D" id="6.10.10.80">
    <property type="entry name" value="Small, acid-soluble spore protein, alpha/beta type-like"/>
    <property type="match status" value="1"/>
</dbReference>
<dbReference type="InterPro" id="IPR001448">
    <property type="entry name" value="SASP_alpha/beta-type"/>
</dbReference>
<dbReference type="InterPro" id="IPR018126">
    <property type="entry name" value="SASP_alpha/beta-type_CS"/>
</dbReference>
<dbReference type="InterPro" id="IPR050847">
    <property type="entry name" value="SASP_DNA-binding"/>
</dbReference>
<dbReference type="InterPro" id="IPR038300">
    <property type="entry name" value="SASP_sf_alpha/beta"/>
</dbReference>
<dbReference type="PANTHER" id="PTHR36107">
    <property type="entry name" value="SMALL, ACID-SOLUBLE SPORE PROTEIN A"/>
    <property type="match status" value="1"/>
</dbReference>
<dbReference type="PANTHER" id="PTHR36107:SF1">
    <property type="entry name" value="SMALL, ACID-SOLUBLE SPORE PROTEIN A"/>
    <property type="match status" value="1"/>
</dbReference>
<dbReference type="Pfam" id="PF00269">
    <property type="entry name" value="SASP"/>
    <property type="match status" value="1"/>
</dbReference>
<dbReference type="PROSITE" id="PS00304">
    <property type="entry name" value="SASP_1"/>
    <property type="match status" value="1"/>
</dbReference>
<dbReference type="PROSITE" id="PS00684">
    <property type="entry name" value="SASP_2"/>
    <property type="match status" value="1"/>
</dbReference>
<protein>
    <recommendedName>
        <fullName>Small, acid-soluble spore protein C2</fullName>
        <shortName>ASSP</shortName>
        <shortName>SASP</shortName>
    </recommendedName>
    <alternativeName>
        <fullName>SSP-3</fullName>
    </alternativeName>
</protein>
<accession>P21887</accession>
<accession>P10573</accession>
<reference key="1">
    <citation type="journal article" date="1990" name="Gene">
        <title>Cloning and sequencing of the genes encoding acid-soluble spore proteins from Clostridium perfringens.</title>
        <authorList>
            <person name="Holck A."/>
            <person name="Blom H."/>
            <person name="Granum P.E."/>
        </authorList>
    </citation>
    <scope>NUCLEOTIDE SEQUENCE [GENOMIC DNA]</scope>
    <source>
        <strain>ATCC 12917 / NCTC 8239 / Type A</strain>
    </source>
</reference>
<reference key="2">
    <citation type="journal article" date="1991" name="FEMS Microbiol. Lett.">
        <title>Cloning and nucleotide sequence of three genes coding for small, acid-soluble proteins of Clostridium perfringens spores.</title>
        <authorList>
            <person name="Cabrera-Martinez R.M."/>
            <person name="Setlow P."/>
        </authorList>
    </citation>
    <scope>NUCLEOTIDE SEQUENCE [GENOMIC DNA]</scope>
</reference>
<reference key="3">
    <citation type="journal article" date="2002" name="Proc. Natl. Acad. Sci. U.S.A.">
        <title>Complete genome sequence of Clostridium perfringens, an anaerobic flesh-eater.</title>
        <authorList>
            <person name="Shimizu T."/>
            <person name="Ohtani K."/>
            <person name="Hirakawa H."/>
            <person name="Ohshima K."/>
            <person name="Yamashita A."/>
            <person name="Shiba T."/>
            <person name="Ogasawara N."/>
            <person name="Hattori M."/>
            <person name="Kuhara S."/>
            <person name="Hayashi H."/>
        </authorList>
    </citation>
    <scope>NUCLEOTIDE SEQUENCE [LARGE SCALE GENOMIC DNA]</scope>
    <source>
        <strain>13 / Type A</strain>
    </source>
</reference>
<reference key="4">
    <citation type="journal article" date="1987" name="FEMS Microbiol. Lett.">
        <title>Isolation and amino acid sequence of an acid soluble protein from Clostridium perfringens spores.</title>
        <authorList>
            <person name="Granum P.E."/>
            <person name="Richardson M."/>
            <person name="Blom H."/>
        </authorList>
    </citation>
    <scope>PRELIMINARY PROTEIN SEQUENCE OF 2-60</scope>
</reference>
<gene>
    <name type="primary">sspC2</name>
    <name type="synonym">ssp3</name>
    <name type="ordered locus">CPE1423</name>
</gene>
<proteinExistence type="evidence at protein level"/>
<name>SAS2_CLOPE</name>
<feature type="initiator methionine" description="Removed">
    <location>
        <position position="1"/>
    </location>
</feature>
<feature type="chain" id="PRO_0000196308" description="Small, acid-soluble spore protein C2">
    <location>
        <begin position="2"/>
        <end position="60"/>
    </location>
</feature>
<feature type="site" description="Cleavage; by spore protease">
    <location>
        <begin position="19"/>
        <end position="20"/>
    </location>
</feature>
<comment type="function">
    <text>SASP are bound to spore DNA. They are double-stranded DNA-binding proteins that cause DNA to change to an a-like conformation. They protect the DNA backbone from chemical and enzymatic cleavage and are thus involved in dormant spore's high resistance to UV light.</text>
</comment>
<comment type="PTM">
    <text>SASP are degraded in the first minutes of spore germination and provide amino acids for both new protein synthesis and metabolism.</text>
</comment>
<comment type="similarity">
    <text evidence="1">Belongs to the alpha/beta-type SASP family.</text>
</comment>
<organism>
    <name type="scientific">Clostridium perfringens (strain 13 / Type A)</name>
    <dbReference type="NCBI Taxonomy" id="195102"/>
    <lineage>
        <taxon>Bacteria</taxon>
        <taxon>Bacillati</taxon>
        <taxon>Bacillota</taxon>
        <taxon>Clostridia</taxon>
        <taxon>Eubacteriales</taxon>
        <taxon>Clostridiaceae</taxon>
        <taxon>Clostridium</taxon>
    </lineage>
</organism>
<keyword id="KW-0903">Direct protein sequencing</keyword>
<keyword id="KW-0238">DNA-binding</keyword>
<keyword id="KW-1185">Reference proteome</keyword>
<keyword id="KW-0749">Sporulation</keyword>
<sequence length="60" mass="6685">MSQHLVPEAKNGLSKFKNEVANEMGVPFSDYNGDLSSRQCGSVGGEMVKRMVEKYEQSMK</sequence>
<evidence type="ECO:0000305" key="1"/>